<feature type="chain" id="PRO_0000172122" description="Putative pre-16S rRNA nuclease">
    <location>
        <begin position="1"/>
        <end position="144"/>
    </location>
</feature>
<proteinExistence type="inferred from homology"/>
<sequence length="144" mass="15863">MPEPARPAPAPVPVHGTLLAFDYGEKRIGVALGNSITRSARALEVIPNRSVEYRFTQITRLVNAWQPVGFVVGMPVHPEGEDQPMIKLAKRFGNQLHGRYGLPVTWVDERYSSIAAQDAGATDDVLDAEAARIILQQFFDESHA</sequence>
<organism>
    <name type="scientific">Ralstonia nicotianae (strain ATCC BAA-1114 / GMI1000)</name>
    <name type="common">Ralstonia solanacearum</name>
    <dbReference type="NCBI Taxonomy" id="267608"/>
    <lineage>
        <taxon>Bacteria</taxon>
        <taxon>Pseudomonadati</taxon>
        <taxon>Pseudomonadota</taxon>
        <taxon>Betaproteobacteria</taxon>
        <taxon>Burkholderiales</taxon>
        <taxon>Burkholderiaceae</taxon>
        <taxon>Ralstonia</taxon>
        <taxon>Ralstonia solanacearum species complex</taxon>
    </lineage>
</organism>
<keyword id="KW-0963">Cytoplasm</keyword>
<keyword id="KW-0378">Hydrolase</keyword>
<keyword id="KW-0540">Nuclease</keyword>
<keyword id="KW-1185">Reference proteome</keyword>
<keyword id="KW-0690">Ribosome biogenesis</keyword>
<protein>
    <recommendedName>
        <fullName evidence="1">Putative pre-16S rRNA nuclease</fullName>
        <ecNumber evidence="1">3.1.-.-</ecNumber>
    </recommendedName>
</protein>
<evidence type="ECO:0000255" key="1">
    <source>
        <dbReference type="HAMAP-Rule" id="MF_00651"/>
    </source>
</evidence>
<comment type="function">
    <text evidence="1">Could be a nuclease involved in processing of the 5'-end of pre-16S rRNA.</text>
</comment>
<comment type="subcellular location">
    <subcellularLocation>
        <location evidence="1">Cytoplasm</location>
    </subcellularLocation>
</comment>
<comment type="similarity">
    <text evidence="1">Belongs to the YqgF nuclease family.</text>
</comment>
<accession>Q8Y1L4</accession>
<gene>
    <name type="ordered locus">RSc0676</name>
    <name type="ORF">RS01581</name>
</gene>
<reference key="1">
    <citation type="journal article" date="2002" name="Nature">
        <title>Genome sequence of the plant pathogen Ralstonia solanacearum.</title>
        <authorList>
            <person name="Salanoubat M."/>
            <person name="Genin S."/>
            <person name="Artiguenave F."/>
            <person name="Gouzy J."/>
            <person name="Mangenot S."/>
            <person name="Arlat M."/>
            <person name="Billault A."/>
            <person name="Brottier P."/>
            <person name="Camus J.-C."/>
            <person name="Cattolico L."/>
            <person name="Chandler M."/>
            <person name="Choisne N."/>
            <person name="Claudel-Renard C."/>
            <person name="Cunnac S."/>
            <person name="Demange N."/>
            <person name="Gaspin C."/>
            <person name="Lavie M."/>
            <person name="Moisan A."/>
            <person name="Robert C."/>
            <person name="Saurin W."/>
            <person name="Schiex T."/>
            <person name="Siguier P."/>
            <person name="Thebault P."/>
            <person name="Whalen M."/>
            <person name="Wincker P."/>
            <person name="Levy M."/>
            <person name="Weissenbach J."/>
            <person name="Boucher C.A."/>
        </authorList>
    </citation>
    <scope>NUCLEOTIDE SEQUENCE [LARGE SCALE GENOMIC DNA]</scope>
    <source>
        <strain>ATCC BAA-1114 / GMI1000</strain>
    </source>
</reference>
<dbReference type="EC" id="3.1.-.-" evidence="1"/>
<dbReference type="EMBL" id="AL646052">
    <property type="protein sequence ID" value="CAD14206.1"/>
    <property type="molecule type" value="Genomic_DNA"/>
</dbReference>
<dbReference type="SMR" id="Q8Y1L4"/>
<dbReference type="STRING" id="267608.RSc0676"/>
<dbReference type="EnsemblBacteria" id="CAD14206">
    <property type="protein sequence ID" value="CAD14206"/>
    <property type="gene ID" value="RSc0676"/>
</dbReference>
<dbReference type="KEGG" id="rso:RSc0676"/>
<dbReference type="eggNOG" id="COG0816">
    <property type="taxonomic scope" value="Bacteria"/>
</dbReference>
<dbReference type="HOGENOM" id="CLU_098240_3_2_4"/>
<dbReference type="Proteomes" id="UP000001436">
    <property type="component" value="Chromosome"/>
</dbReference>
<dbReference type="GO" id="GO:0005829">
    <property type="term" value="C:cytosol"/>
    <property type="evidence" value="ECO:0007669"/>
    <property type="project" value="TreeGrafter"/>
</dbReference>
<dbReference type="GO" id="GO:0004518">
    <property type="term" value="F:nuclease activity"/>
    <property type="evidence" value="ECO:0007669"/>
    <property type="project" value="UniProtKB-KW"/>
</dbReference>
<dbReference type="GO" id="GO:0000967">
    <property type="term" value="P:rRNA 5'-end processing"/>
    <property type="evidence" value="ECO:0007669"/>
    <property type="project" value="UniProtKB-UniRule"/>
</dbReference>
<dbReference type="CDD" id="cd16964">
    <property type="entry name" value="YqgF"/>
    <property type="match status" value="1"/>
</dbReference>
<dbReference type="Gene3D" id="3.30.420.140">
    <property type="entry name" value="YqgF/RNase H-like domain"/>
    <property type="match status" value="1"/>
</dbReference>
<dbReference type="HAMAP" id="MF_00651">
    <property type="entry name" value="Nuclease_YqgF"/>
    <property type="match status" value="1"/>
</dbReference>
<dbReference type="InterPro" id="IPR012337">
    <property type="entry name" value="RNaseH-like_sf"/>
</dbReference>
<dbReference type="InterPro" id="IPR005227">
    <property type="entry name" value="YqgF"/>
</dbReference>
<dbReference type="InterPro" id="IPR006641">
    <property type="entry name" value="YqgF/RNaseH-like_dom"/>
</dbReference>
<dbReference type="InterPro" id="IPR037027">
    <property type="entry name" value="YqgF/RNaseH-like_dom_sf"/>
</dbReference>
<dbReference type="NCBIfam" id="TIGR00250">
    <property type="entry name" value="RNAse_H_YqgF"/>
    <property type="match status" value="1"/>
</dbReference>
<dbReference type="PANTHER" id="PTHR33317">
    <property type="entry name" value="POLYNUCLEOTIDYL TRANSFERASE, RIBONUCLEASE H-LIKE SUPERFAMILY PROTEIN"/>
    <property type="match status" value="1"/>
</dbReference>
<dbReference type="PANTHER" id="PTHR33317:SF4">
    <property type="entry name" value="POLYNUCLEOTIDYL TRANSFERASE, RIBONUCLEASE H-LIKE SUPERFAMILY PROTEIN"/>
    <property type="match status" value="1"/>
</dbReference>
<dbReference type="Pfam" id="PF03652">
    <property type="entry name" value="RuvX"/>
    <property type="match status" value="1"/>
</dbReference>
<dbReference type="SMART" id="SM00732">
    <property type="entry name" value="YqgFc"/>
    <property type="match status" value="1"/>
</dbReference>
<dbReference type="SUPFAM" id="SSF53098">
    <property type="entry name" value="Ribonuclease H-like"/>
    <property type="match status" value="1"/>
</dbReference>
<name>YQGF_RALN1</name>